<organismHost>
    <name type="scientific">Botryotinia fuckeliana</name>
    <name type="common">Noble rot fungus</name>
    <name type="synonym">Botrytis cinerea</name>
    <dbReference type="NCBI Taxonomy" id="40559"/>
</organismHost>
<organism>
    <name type="scientific">Botrytis virus X (isolate Botrytis cinerea/New Zealand/Howitt/2006)</name>
    <name type="common">BOTV-X</name>
    <dbReference type="NCBI Taxonomy" id="686947"/>
    <lineage>
        <taxon>Viruses</taxon>
        <taxon>Riboviria</taxon>
        <taxon>Orthornavirae</taxon>
        <taxon>Kitrinoviricota</taxon>
        <taxon>Alsuviricetes</taxon>
        <taxon>Tymovirales</taxon>
        <taxon>Alphaflexiviridae</taxon>
        <taxon>Botrexvirus</taxon>
        <taxon>Botrytis virus X</taxon>
    </lineage>
</organism>
<dbReference type="EMBL" id="AY055762">
    <property type="protein sequence ID" value="AAL17725.1"/>
    <property type="molecule type" value="Genomic_RNA"/>
</dbReference>
<dbReference type="RefSeq" id="NP_932310.1">
    <property type="nucleotide sequence ID" value="NC_005132.1"/>
</dbReference>
<dbReference type="KEGG" id="vg:2943229"/>
<dbReference type="Proteomes" id="UP000001664">
    <property type="component" value="Segment"/>
</dbReference>
<accession>Q6YNQ4</accession>
<proteinExistence type="predicted"/>
<keyword id="KW-1185">Reference proteome</keyword>
<gene>
    <name type="primary">ORF4</name>
</gene>
<name>ORF4_BOTVX</name>
<feature type="chain" id="PRO_0000401070" description="Uncharacterized ORF4 protein">
    <location>
        <begin position="1"/>
        <end position="132"/>
    </location>
</feature>
<reference key="1">
    <citation type="journal article" date="2006" name="Arch. Virol.">
        <title>Genome characterization of a flexuous rod-shaped mycovirus, Botrytis virus X, reveals high amino acid identity to genes from plant 'potex-like' viruses.</title>
        <authorList>
            <person name="Howitt R.L."/>
            <person name="Beever R.E."/>
            <person name="Pearson M.N."/>
            <person name="Forster R.L."/>
        </authorList>
    </citation>
    <scope>NUCLEOTIDE SEQUENCE [GENOMIC RNA]</scope>
</reference>
<protein>
    <recommendedName>
        <fullName>Uncharacterized ORF4 protein</fullName>
    </recommendedName>
</protein>
<sequence>MPTYSSMLHAKMIKSPAALNTPQPSPKQAVSNAHRLDGGSSYVVSLSEISSCPTSTTNSLFAAATPSTLLLSALYCTPPSQLRMKSSCTLTLFIPPLNTAASPTLPDTSCHGEWNTTTRPCLAASTALMYSL</sequence>